<dbReference type="EMBL" id="AF355130">
    <property type="protein sequence ID" value="AAL32436.1"/>
    <property type="molecule type" value="Genomic_DNA"/>
</dbReference>
<dbReference type="SMR" id="Q8WP13"/>
<dbReference type="GO" id="GO:0005737">
    <property type="term" value="C:cytoplasm"/>
    <property type="evidence" value="ECO:0007669"/>
    <property type="project" value="UniProtKB-KW"/>
</dbReference>
<dbReference type="GO" id="GO:0045171">
    <property type="term" value="C:intercellular bridge"/>
    <property type="evidence" value="ECO:0007669"/>
    <property type="project" value="UniProtKB-ARBA"/>
</dbReference>
<dbReference type="GO" id="GO:0072687">
    <property type="term" value="C:meiotic spindle"/>
    <property type="evidence" value="ECO:0000250"/>
    <property type="project" value="UniProtKB"/>
</dbReference>
<dbReference type="GO" id="GO:0005874">
    <property type="term" value="C:microtubule"/>
    <property type="evidence" value="ECO:0007669"/>
    <property type="project" value="UniProtKB-KW"/>
</dbReference>
<dbReference type="GO" id="GO:0072686">
    <property type="term" value="C:mitotic spindle"/>
    <property type="evidence" value="ECO:0007669"/>
    <property type="project" value="UniProtKB-ARBA"/>
</dbReference>
<dbReference type="GO" id="GO:0005525">
    <property type="term" value="F:GTP binding"/>
    <property type="evidence" value="ECO:0007669"/>
    <property type="project" value="UniProtKB-KW"/>
</dbReference>
<dbReference type="GO" id="GO:0003924">
    <property type="term" value="F:GTPase activity"/>
    <property type="evidence" value="ECO:0007669"/>
    <property type="project" value="InterPro"/>
</dbReference>
<dbReference type="GO" id="GO:0046872">
    <property type="term" value="F:metal ion binding"/>
    <property type="evidence" value="ECO:0007669"/>
    <property type="project" value="UniProtKB-KW"/>
</dbReference>
<dbReference type="GO" id="GO:0005200">
    <property type="term" value="F:structural constituent of cytoskeleton"/>
    <property type="evidence" value="ECO:0007669"/>
    <property type="project" value="InterPro"/>
</dbReference>
<dbReference type="GO" id="GO:0001556">
    <property type="term" value="P:oocyte maturation"/>
    <property type="evidence" value="ECO:0000250"/>
    <property type="project" value="UniProtKB"/>
</dbReference>
<dbReference type="GO" id="GO:0007056">
    <property type="term" value="P:spindle assembly involved in female meiosis"/>
    <property type="evidence" value="ECO:0000250"/>
    <property type="project" value="UniProtKB"/>
</dbReference>
<dbReference type="CDD" id="cd02187">
    <property type="entry name" value="beta_tubulin"/>
    <property type="match status" value="1"/>
</dbReference>
<dbReference type="FunFam" id="1.10.287.600:FF:000002">
    <property type="entry name" value="Tubulin beta chain"/>
    <property type="match status" value="1"/>
</dbReference>
<dbReference type="FunFam" id="3.30.1330.20:FF:000002">
    <property type="entry name" value="Tubulin beta chain"/>
    <property type="match status" value="1"/>
</dbReference>
<dbReference type="FunFam" id="3.40.50.1440:FF:000025">
    <property type="entry name" value="Tubulin beta chain"/>
    <property type="match status" value="1"/>
</dbReference>
<dbReference type="FunFam" id="3.40.50.1440:FF:000018">
    <property type="entry name" value="Tubulin beta chain, putative"/>
    <property type="match status" value="1"/>
</dbReference>
<dbReference type="Gene3D" id="1.10.287.600">
    <property type="entry name" value="Helix hairpin bin"/>
    <property type="match status" value="1"/>
</dbReference>
<dbReference type="Gene3D" id="3.30.1330.20">
    <property type="entry name" value="Tubulin/FtsZ, C-terminal domain"/>
    <property type="match status" value="1"/>
</dbReference>
<dbReference type="Gene3D" id="3.40.50.1440">
    <property type="entry name" value="Tubulin/FtsZ, GTPase domain"/>
    <property type="match status" value="1"/>
</dbReference>
<dbReference type="InterPro" id="IPR013838">
    <property type="entry name" value="Beta-tubulin_BS"/>
</dbReference>
<dbReference type="InterPro" id="IPR002453">
    <property type="entry name" value="Beta_tubulin"/>
</dbReference>
<dbReference type="InterPro" id="IPR008280">
    <property type="entry name" value="Tub_FtsZ_C"/>
</dbReference>
<dbReference type="InterPro" id="IPR000217">
    <property type="entry name" value="Tubulin"/>
</dbReference>
<dbReference type="InterPro" id="IPR037103">
    <property type="entry name" value="Tubulin/FtsZ-like_C"/>
</dbReference>
<dbReference type="InterPro" id="IPR018316">
    <property type="entry name" value="Tubulin/FtsZ_2-layer-sand-dom"/>
</dbReference>
<dbReference type="InterPro" id="IPR036525">
    <property type="entry name" value="Tubulin/FtsZ_GTPase_sf"/>
</dbReference>
<dbReference type="InterPro" id="IPR023123">
    <property type="entry name" value="Tubulin_C"/>
</dbReference>
<dbReference type="InterPro" id="IPR017975">
    <property type="entry name" value="Tubulin_CS"/>
</dbReference>
<dbReference type="InterPro" id="IPR003008">
    <property type="entry name" value="Tubulin_FtsZ_GTPase"/>
</dbReference>
<dbReference type="PANTHER" id="PTHR11588">
    <property type="entry name" value="TUBULIN"/>
    <property type="match status" value="1"/>
</dbReference>
<dbReference type="Pfam" id="PF00091">
    <property type="entry name" value="Tubulin"/>
    <property type="match status" value="1"/>
</dbReference>
<dbReference type="Pfam" id="PF03953">
    <property type="entry name" value="Tubulin_C"/>
    <property type="match status" value="1"/>
</dbReference>
<dbReference type="PRINTS" id="PR01163">
    <property type="entry name" value="BETATUBULIN"/>
</dbReference>
<dbReference type="PRINTS" id="PR01161">
    <property type="entry name" value="TUBULIN"/>
</dbReference>
<dbReference type="SMART" id="SM00864">
    <property type="entry name" value="Tubulin"/>
    <property type="match status" value="1"/>
</dbReference>
<dbReference type="SMART" id="SM00865">
    <property type="entry name" value="Tubulin_C"/>
    <property type="match status" value="1"/>
</dbReference>
<dbReference type="SUPFAM" id="SSF55307">
    <property type="entry name" value="Tubulin C-terminal domain-like"/>
    <property type="match status" value="1"/>
</dbReference>
<dbReference type="SUPFAM" id="SSF52490">
    <property type="entry name" value="Tubulin nucleotide-binding domain-like"/>
    <property type="match status" value="1"/>
</dbReference>
<dbReference type="PROSITE" id="PS00227">
    <property type="entry name" value="TUBULIN"/>
    <property type="match status" value="1"/>
</dbReference>
<dbReference type="PROSITE" id="PS00228">
    <property type="entry name" value="TUBULIN_B_AUTOREG"/>
    <property type="match status" value="1"/>
</dbReference>
<comment type="function">
    <text evidence="5">Tubulin is the major constituent of microtubules, a cylinder consisting of laterally associated linear protofilaments composed of alpha- and beta-tubulin heterodimers. Microtubules grow by the addition of GTP-tubulin dimers to the microtubule end, where a stabilizing cap forms. Below the cap, tubulin dimers are in GDP-bound state, owing to GTPase activity of alpha-tubulin. Has a key role in meiotic spindle assembly and oocyte maturation (By similarity).</text>
</comment>
<comment type="cofactor">
    <cofactor evidence="2">
        <name>Mg(2+)</name>
        <dbReference type="ChEBI" id="CHEBI:18420"/>
    </cofactor>
</comment>
<comment type="subunit">
    <text>Dimer of alpha and beta chains. A typical microtubule is a hollow water-filled tube with an outer diameter of 25 nm and an inner diameter of 15 nM. Alpha-beta heterodimers associate head-to-tail to form protofilaments running lengthwise along the microtubule wall with the beta-tubulin subunit facing the microtubule plus end conferring a structural polarity. Microtubules usually have 13 protofilaments but different protofilament numbers can be found in some organisms and specialized cells.</text>
</comment>
<comment type="subcellular location">
    <subcellularLocation>
        <location evidence="5">Cytoplasm</location>
        <location evidence="5">Cytoskeleton</location>
    </subcellularLocation>
    <subcellularLocation>
        <location evidence="5">Cytoplasm</location>
        <location evidence="5">Cytoskeleton</location>
        <location evidence="5">Spindle</location>
    </subcellularLocation>
</comment>
<comment type="domain">
    <text evidence="1">The MREI motif is common among all beta-tubulin isoforms and may be critical for tubulin autoregulation.</text>
</comment>
<comment type="PTM">
    <text evidence="7">Some glutamate residues at the C-terminus are polyglycylated, resulting in polyglycine chains on the gamma-carboxyl group. Glycylation is mainly limited to tubulin incorporated into axonemes (cilia and flagella) whereas glutamylation is prevalent in neuronal cells, centrioles, axonemes, and the mitotic spindle. Both modifications can coexist on the same protein on adjacent residues, and lowering polyglycylation levels increases polyglutamylation, and reciprocally. Cilia and flagella glycylation is required for their stability and maintenance. Flagella glycylation controls sperm motility.</text>
</comment>
<comment type="PTM">
    <text evidence="6 7">Some glutamate residues at the C-terminus are polyglutamylated, resulting in polyglutamate chains on the gamma-carboxyl group (By similarity). Polyglutamylation plays a key role in microtubule severing by spastin (SPAST). SPAST preferentially recognizes and acts on microtubules decorated with short polyglutamate tails: severing activity by SPAST increases as the number of glutamates per tubulin rises from one to eight, but decreases beyond this glutamylation threshold (By similarity). Glutamylation is also involved in cilia motility (By similarity).</text>
</comment>
<comment type="PTM">
    <text evidence="5">Phosphorylated on Ser-172 by CDK1 during the cell cycle, from metaphase to telophase, but not in interphase. This phosphorylation inhibits tubulin incorporation into microtubules.</text>
</comment>
<comment type="similarity">
    <text evidence="8">Belongs to the tubulin family.</text>
</comment>
<proteinExistence type="inferred from homology"/>
<organism>
    <name type="scientific">Papio hamadryas</name>
    <name type="common">Hamadryas baboon</name>
    <dbReference type="NCBI Taxonomy" id="9557"/>
    <lineage>
        <taxon>Eukaryota</taxon>
        <taxon>Metazoa</taxon>
        <taxon>Chordata</taxon>
        <taxon>Craniata</taxon>
        <taxon>Vertebrata</taxon>
        <taxon>Euteleostomi</taxon>
        <taxon>Mammalia</taxon>
        <taxon>Eutheria</taxon>
        <taxon>Euarchontoglires</taxon>
        <taxon>Primates</taxon>
        <taxon>Haplorrhini</taxon>
        <taxon>Catarrhini</taxon>
        <taxon>Cercopithecidae</taxon>
        <taxon>Cercopithecinae</taxon>
        <taxon>Papio</taxon>
    </lineage>
</organism>
<protein>
    <recommendedName>
        <fullName>Tubulin beta-8 chain</fullName>
    </recommendedName>
</protein>
<name>TBB8_PAPHA</name>
<feature type="chain" id="PRO_0000048260" description="Tubulin beta-8 chain">
    <location>
        <begin position="1"/>
        <end position="444"/>
    </location>
</feature>
<feature type="short sequence motif" description="MREI motif" evidence="1">
    <location>
        <begin position="1"/>
        <end position="4"/>
    </location>
</feature>
<feature type="binding site" evidence="3">
    <location>
        <position position="11"/>
    </location>
    <ligand>
        <name>GTP</name>
        <dbReference type="ChEBI" id="CHEBI:37565"/>
    </ligand>
</feature>
<feature type="binding site" evidence="2">
    <location>
        <position position="69"/>
    </location>
    <ligand>
        <name>GTP</name>
        <dbReference type="ChEBI" id="CHEBI:37565"/>
    </ligand>
</feature>
<feature type="binding site" evidence="2">
    <location>
        <position position="69"/>
    </location>
    <ligand>
        <name>Mg(2+)</name>
        <dbReference type="ChEBI" id="CHEBI:18420"/>
    </ligand>
</feature>
<feature type="binding site" evidence="3">
    <location>
        <position position="138"/>
    </location>
    <ligand>
        <name>GTP</name>
        <dbReference type="ChEBI" id="CHEBI:37565"/>
    </ligand>
</feature>
<feature type="binding site" evidence="3">
    <location>
        <position position="142"/>
    </location>
    <ligand>
        <name>GTP</name>
        <dbReference type="ChEBI" id="CHEBI:37565"/>
    </ligand>
</feature>
<feature type="binding site" evidence="3">
    <location>
        <position position="143"/>
    </location>
    <ligand>
        <name>GTP</name>
        <dbReference type="ChEBI" id="CHEBI:37565"/>
    </ligand>
</feature>
<feature type="binding site" evidence="3">
    <location>
        <position position="144"/>
    </location>
    <ligand>
        <name>GTP</name>
        <dbReference type="ChEBI" id="CHEBI:37565"/>
    </ligand>
</feature>
<feature type="binding site" evidence="3">
    <location>
        <position position="204"/>
    </location>
    <ligand>
        <name>GTP</name>
        <dbReference type="ChEBI" id="CHEBI:37565"/>
    </ligand>
</feature>
<feature type="binding site" evidence="3">
    <location>
        <position position="226"/>
    </location>
    <ligand>
        <name>GTP</name>
        <dbReference type="ChEBI" id="CHEBI:37565"/>
    </ligand>
</feature>
<feature type="modified residue" description="Phosphoserine; by CDK1" evidence="5">
    <location>
        <position position="172"/>
    </location>
</feature>
<feature type="modified residue" description="5-glutamyl polyglutamate" evidence="4">
    <location>
        <position position="436"/>
    </location>
</feature>
<accession>Q8WP13</accession>
<keyword id="KW-0963">Cytoplasm</keyword>
<keyword id="KW-0206">Cytoskeleton</keyword>
<keyword id="KW-0342">GTP-binding</keyword>
<keyword id="KW-1017">Isopeptide bond</keyword>
<keyword id="KW-0460">Magnesium</keyword>
<keyword id="KW-0479">Metal-binding</keyword>
<keyword id="KW-0493">Microtubule</keyword>
<keyword id="KW-0547">Nucleotide-binding</keyword>
<keyword id="KW-0597">Phosphoprotein</keyword>
<sequence>MREIVLTQAGQCGNQIGAKFWEVISDEHAIDSAGTYHGDSRLQLERIDVYYNEACGGRYVPRAVLVDLEPGTLDSVRSGPFGQIFRPDSFIFGQCGAGNNWAKGHYTEGAELMESVMDVVRKEAESCDCLQGFQLTHSLGGGTGSGMGTLLLSKIREEYPDRIINTFSILPSPKVSDTVVEPYNATLSVHQLIENADETFCIDNEALYDICSRTLKLPTPTYGDLNHLVSATMSGVTTCLRFPGQLNADLRKLAVNMVPFPRLHFFMPGFAPLTSRGSQQYRALTVAELTQQMFDARNMMAACDPRHGRYLTAAAIFRGRMPMREVDEQMFNIQNKNSSYFADWLPHNVKTAVCDIPPRGLKMSATFIGNNTAIQELFKRVSEQFTAMFRRKAFLHWYTGEGMDEMEFTEAESNMNDLVSEYQQYQDATAEEEEFEEYAEEEEA</sequence>
<gene>
    <name type="primary">TUBB8</name>
</gene>
<evidence type="ECO:0000250" key="1">
    <source>
        <dbReference type="UniProtKB" id="P07437"/>
    </source>
</evidence>
<evidence type="ECO:0000250" key="2">
    <source>
        <dbReference type="UniProtKB" id="P68363"/>
    </source>
</evidence>
<evidence type="ECO:0000250" key="3">
    <source>
        <dbReference type="UniProtKB" id="Q13509"/>
    </source>
</evidence>
<evidence type="ECO:0000250" key="4">
    <source>
        <dbReference type="UniProtKB" id="Q2T9S0"/>
    </source>
</evidence>
<evidence type="ECO:0000250" key="5">
    <source>
        <dbReference type="UniProtKB" id="Q3ZCM7"/>
    </source>
</evidence>
<evidence type="ECO:0000250" key="6">
    <source>
        <dbReference type="UniProtKB" id="Q71U36"/>
    </source>
</evidence>
<evidence type="ECO:0000250" key="7">
    <source>
        <dbReference type="UniProtKB" id="Q922F4"/>
    </source>
</evidence>
<evidence type="ECO:0000305" key="8"/>
<reference key="1">
    <citation type="journal article" date="2002" name="Am. J. Hum. Genet.">
        <title>A cascade of complex subtelomeric duplications during the evolution of the hominoid and Old World monkey genomes.</title>
        <authorList>
            <person name="van Geel M."/>
            <person name="Eichler E.E."/>
            <person name="Beck A.F."/>
            <person name="Shan Z."/>
            <person name="Haaf T."/>
            <person name="van der Maarel S.M."/>
            <person name="Frants R.R."/>
            <person name="de Jong P.J."/>
        </authorList>
    </citation>
    <scope>NUCLEOTIDE SEQUENCE [GENOMIC DNA]</scope>
</reference>